<evidence type="ECO:0000250" key="1"/>
<evidence type="ECO:0000250" key="2">
    <source>
        <dbReference type="UniProtKB" id="Q924N5"/>
    </source>
</evidence>
<evidence type="ECO:0000250" key="3">
    <source>
        <dbReference type="UniProtKB" id="Q96GR2"/>
    </source>
</evidence>
<evidence type="ECO:0000250" key="4">
    <source>
        <dbReference type="UniProtKB" id="Q99PU5"/>
    </source>
</evidence>
<evidence type="ECO:0000256" key="5">
    <source>
        <dbReference type="SAM" id="MobiDB-lite"/>
    </source>
</evidence>
<evidence type="ECO:0000305" key="6"/>
<dbReference type="EC" id="6.2.1.3" evidence="3"/>
<dbReference type="EMBL" id="BT021864">
    <property type="protein sequence ID" value="AAX46711.1"/>
    <property type="status" value="ALT_FRAME"/>
    <property type="molecule type" value="mRNA"/>
</dbReference>
<dbReference type="EMBL" id="BC112858">
    <property type="protein sequence ID" value="AAI12859.1"/>
    <property type="molecule type" value="mRNA"/>
</dbReference>
<dbReference type="RefSeq" id="NP_001019719.1">
    <property type="nucleotide sequence ID" value="NM_001024548.1"/>
</dbReference>
<dbReference type="SMR" id="Q2KHW5"/>
<dbReference type="FunCoup" id="Q2KHW5">
    <property type="interactions" value="570"/>
</dbReference>
<dbReference type="STRING" id="9913.ENSBTAP00000058590"/>
<dbReference type="PaxDb" id="9913-ENSBTAP00000043854"/>
<dbReference type="GeneID" id="515577"/>
<dbReference type="KEGG" id="bta:515577"/>
<dbReference type="CTD" id="23205"/>
<dbReference type="eggNOG" id="KOG1256">
    <property type="taxonomic scope" value="Eukaryota"/>
</dbReference>
<dbReference type="HOGENOM" id="CLU_000022_45_5_1"/>
<dbReference type="InParanoid" id="Q2KHW5"/>
<dbReference type="OrthoDB" id="3633556at2759"/>
<dbReference type="TreeFam" id="TF354286"/>
<dbReference type="Proteomes" id="UP000009136">
    <property type="component" value="Unplaced"/>
</dbReference>
<dbReference type="GO" id="GO:0005737">
    <property type="term" value="C:cytoplasm"/>
    <property type="evidence" value="ECO:0000318"/>
    <property type="project" value="GO_Central"/>
</dbReference>
<dbReference type="GO" id="GO:0031410">
    <property type="term" value="C:cytoplasmic vesicle"/>
    <property type="evidence" value="ECO:0007669"/>
    <property type="project" value="UniProtKB-KW"/>
</dbReference>
<dbReference type="GO" id="GO:0005783">
    <property type="term" value="C:endoplasmic reticulum"/>
    <property type="evidence" value="ECO:0000250"/>
    <property type="project" value="UniProtKB"/>
</dbReference>
<dbReference type="GO" id="GO:0005886">
    <property type="term" value="C:plasma membrane"/>
    <property type="evidence" value="ECO:0000250"/>
    <property type="project" value="UniProtKB"/>
</dbReference>
<dbReference type="GO" id="GO:0005524">
    <property type="term" value="F:ATP binding"/>
    <property type="evidence" value="ECO:0007669"/>
    <property type="project" value="UniProtKB-KW"/>
</dbReference>
<dbReference type="GO" id="GO:0004467">
    <property type="term" value="F:long-chain fatty acid-CoA ligase activity"/>
    <property type="evidence" value="ECO:0000250"/>
    <property type="project" value="UniProtKB"/>
</dbReference>
<dbReference type="GO" id="GO:0042759">
    <property type="term" value="P:long-chain fatty acid biosynthetic process"/>
    <property type="evidence" value="ECO:0000318"/>
    <property type="project" value="GO_Central"/>
</dbReference>
<dbReference type="CDD" id="cd05933">
    <property type="entry name" value="ACSBG_like"/>
    <property type="match status" value="1"/>
</dbReference>
<dbReference type="FunFam" id="3.40.50.12780:FF:000021">
    <property type="entry name" value="Long-chain-fatty-acid--CoA ligase ACSBG1 isoform 1"/>
    <property type="match status" value="1"/>
</dbReference>
<dbReference type="FunFam" id="3.40.50.12780:FF:000023">
    <property type="entry name" value="Long-chain-fatty-acid--CoA ligase ACSBG1 isoform 1"/>
    <property type="match status" value="1"/>
</dbReference>
<dbReference type="Gene3D" id="3.40.50.12780">
    <property type="entry name" value="N-terminal domain of ligase-like"/>
    <property type="match status" value="2"/>
</dbReference>
<dbReference type="InterPro" id="IPR020845">
    <property type="entry name" value="AMP-binding_CS"/>
</dbReference>
<dbReference type="InterPro" id="IPR000873">
    <property type="entry name" value="AMP-dep_synth/lig_dom"/>
</dbReference>
<dbReference type="InterPro" id="IPR042099">
    <property type="entry name" value="ANL_N_sf"/>
</dbReference>
<dbReference type="PANTHER" id="PTHR43272:SF93">
    <property type="entry name" value="ACYL-COA SYNTHETASE BUBBLEGUM FAMILY MEMBER 1"/>
    <property type="match status" value="1"/>
</dbReference>
<dbReference type="PANTHER" id="PTHR43272">
    <property type="entry name" value="LONG-CHAIN-FATTY-ACID--COA LIGASE"/>
    <property type="match status" value="1"/>
</dbReference>
<dbReference type="Pfam" id="PF00501">
    <property type="entry name" value="AMP-binding"/>
    <property type="match status" value="1"/>
</dbReference>
<dbReference type="Pfam" id="PF23562">
    <property type="entry name" value="AMP-binding_C_3"/>
    <property type="match status" value="1"/>
</dbReference>
<dbReference type="SUPFAM" id="SSF56801">
    <property type="entry name" value="Acetyl-CoA synthetase-like"/>
    <property type="match status" value="1"/>
</dbReference>
<dbReference type="PROSITE" id="PS00455">
    <property type="entry name" value="AMP_BINDING"/>
    <property type="match status" value="1"/>
</dbReference>
<keyword id="KW-0067">ATP-binding</keyword>
<keyword id="KW-1003">Cell membrane</keyword>
<keyword id="KW-0963">Cytoplasm</keyword>
<keyword id="KW-0968">Cytoplasmic vesicle</keyword>
<keyword id="KW-0256">Endoplasmic reticulum</keyword>
<keyword id="KW-0276">Fatty acid metabolism</keyword>
<keyword id="KW-0436">Ligase</keyword>
<keyword id="KW-0443">Lipid metabolism</keyword>
<keyword id="KW-0472">Membrane</keyword>
<keyword id="KW-0492">Microsome</keyword>
<keyword id="KW-0547">Nucleotide-binding</keyword>
<keyword id="KW-0597">Phosphoprotein</keyword>
<keyword id="KW-1185">Reference proteome</keyword>
<accession>Q2KHW5</accession>
<accession>Q58CT3</accession>
<reference key="1">
    <citation type="journal article" date="2005" name="BMC Genomics">
        <title>Characterization of 954 bovine full-CDS cDNA sequences.</title>
        <authorList>
            <person name="Harhay G.P."/>
            <person name="Sonstegard T.S."/>
            <person name="Keele J.W."/>
            <person name="Heaton M.P."/>
            <person name="Clawson M.L."/>
            <person name="Snelling W.M."/>
            <person name="Wiedmann R.T."/>
            <person name="Van Tassell C.P."/>
            <person name="Smith T.P.L."/>
        </authorList>
    </citation>
    <scope>NUCLEOTIDE SEQUENCE [LARGE SCALE MRNA]</scope>
</reference>
<reference key="2">
    <citation type="submission" date="2006-01" db="EMBL/GenBank/DDBJ databases">
        <authorList>
            <consortium name="NIH - Mammalian Gene Collection (MGC) project"/>
        </authorList>
    </citation>
    <scope>NUCLEOTIDE SEQUENCE [LARGE SCALE MRNA]</scope>
    <source>
        <strain>Hereford</strain>
        <tissue>Hypothalamus</tissue>
    </source>
</reference>
<organism>
    <name type="scientific">Bos taurus</name>
    <name type="common">Bovine</name>
    <dbReference type="NCBI Taxonomy" id="9913"/>
    <lineage>
        <taxon>Eukaryota</taxon>
        <taxon>Metazoa</taxon>
        <taxon>Chordata</taxon>
        <taxon>Craniata</taxon>
        <taxon>Vertebrata</taxon>
        <taxon>Euteleostomi</taxon>
        <taxon>Mammalia</taxon>
        <taxon>Eutheria</taxon>
        <taxon>Laurasiatheria</taxon>
        <taxon>Artiodactyla</taxon>
        <taxon>Ruminantia</taxon>
        <taxon>Pecora</taxon>
        <taxon>Bovidae</taxon>
        <taxon>Bovinae</taxon>
        <taxon>Bos</taxon>
    </lineage>
</organism>
<gene>
    <name evidence="3" type="primary">ACSBG1</name>
</gene>
<proteinExistence type="evidence at transcript level"/>
<feature type="chain" id="PRO_0000315807" description="Long-chain-fatty-acid--CoA ligase ACSBG1">
    <location>
        <begin position="1"/>
        <end position="726"/>
    </location>
</feature>
<feature type="region of interest" description="Disordered" evidence="5">
    <location>
        <begin position="1"/>
        <end position="39"/>
    </location>
</feature>
<feature type="region of interest" description="Disordered" evidence="5">
    <location>
        <begin position="707"/>
        <end position="726"/>
    </location>
</feature>
<feature type="compositionally biased region" description="Polar residues" evidence="5">
    <location>
        <begin position="17"/>
        <end position="36"/>
    </location>
</feature>
<feature type="modified residue" description="Phosphoserine" evidence="2">
    <location>
        <position position="36"/>
    </location>
</feature>
<feature type="modified residue" description="Phosphotyrosine" evidence="4">
    <location>
        <position position="641"/>
    </location>
</feature>
<name>ACBG1_BOVIN</name>
<sequence length="726" mass="80585">MPDSRAAPQESLLDASLGTTQENVGTSSLTDGQTLSKEPLSHALKLSTPEKVKDAQLNPPEEALWTTRADGRVRLRIDPICSQTPRTVHQMFSTTLDKYGDLSAMGFKRQGTWEHISYTQYYLLARKAAKGFLKLGLERAHSVAILAFNSPEWFFSAVGAVFGGGIITGIYTTSSPEACQYIAYDCRANIIVVDTQKQLEKILKIWKHLPHLKAVVIYREAPPMRMPSVYTMEELMELGNEVPEEALDVIINAQKPNQCCALVYTSGTTGNPKGVMLSQDNITWTARYGSQAGDIQPAEIQQEVVVSYLPLSHIAAQIYDLWTGIQWGAQVCFAEPDALKGSLVNTLREVEPTSHMGVPRVWEKIMEQIQEVAAQSGFIWRKMLLWAMSVTLEQNLTCPSSDLKPFTTRLADYLVLAKVRQALGFAKCQKNFYGAAPMTAETQHFFLGLNIRLYAGYGLSETSGPHFMSSPYNYRLYSSGKVVPGCQVKLVNEDAEGIGEICLWGRTIFMGYLNMEDKTCEAIDAEGWLHTGDTGRLDADGFLYITGRLKELIITAGGENVPPVPIEEAVKTELPIIRNAMLIGDQRKFLSMLLTLKCTLDPDTFEPTDNLTEQAVEFCQRVGSKATTVSEVVGKKDEAVYQAIEEGIQRVNMNAAARPYHIQKWAILEKDFSISGGELGPTMKLKRLAVLEKYKDVIDSFYQEQKSKQGSSLPGFSLRWQTGASS</sequence>
<protein>
    <recommendedName>
        <fullName evidence="3">Long-chain-fatty-acid--CoA ligase ACSBG1</fullName>
        <ecNumber evidence="3">6.2.1.3</ecNumber>
    </recommendedName>
    <alternativeName>
        <fullName>Acyl-CoA synthetase bubblegum family member 1</fullName>
    </alternativeName>
</protein>
<comment type="function">
    <text evidence="3">Catalyzes the conversion of fatty acids such as long-chain and very long-chain fatty acids to their active form acyl-CoAs for both synthesis of cellular lipids, and degradation via beta-oxidation. Can activate diverse saturated, monosaturated and polyunsaturated fatty acids.</text>
</comment>
<comment type="catalytic activity">
    <reaction evidence="3">
        <text>a long-chain fatty acid + ATP + CoA = a long-chain fatty acyl-CoA + AMP + diphosphate</text>
        <dbReference type="Rhea" id="RHEA:15421"/>
        <dbReference type="ChEBI" id="CHEBI:30616"/>
        <dbReference type="ChEBI" id="CHEBI:33019"/>
        <dbReference type="ChEBI" id="CHEBI:57287"/>
        <dbReference type="ChEBI" id="CHEBI:57560"/>
        <dbReference type="ChEBI" id="CHEBI:83139"/>
        <dbReference type="ChEBI" id="CHEBI:456215"/>
        <dbReference type="EC" id="6.2.1.3"/>
    </reaction>
</comment>
<comment type="catalytic activity">
    <reaction evidence="3">
        <text>(E)-hexadec-2-enoate + ATP + CoA = (2E)-hexadecenoyl-CoA + AMP + diphosphate</text>
        <dbReference type="Rhea" id="RHEA:36139"/>
        <dbReference type="ChEBI" id="CHEBI:30616"/>
        <dbReference type="ChEBI" id="CHEBI:33019"/>
        <dbReference type="ChEBI" id="CHEBI:57287"/>
        <dbReference type="ChEBI" id="CHEBI:61526"/>
        <dbReference type="ChEBI" id="CHEBI:72745"/>
        <dbReference type="ChEBI" id="CHEBI:456215"/>
    </reaction>
</comment>
<comment type="catalytic activity">
    <reaction evidence="3">
        <text>hexadecanoate + ATP + CoA = hexadecanoyl-CoA + AMP + diphosphate</text>
        <dbReference type="Rhea" id="RHEA:30751"/>
        <dbReference type="ChEBI" id="CHEBI:7896"/>
        <dbReference type="ChEBI" id="CHEBI:30616"/>
        <dbReference type="ChEBI" id="CHEBI:33019"/>
        <dbReference type="ChEBI" id="CHEBI:57287"/>
        <dbReference type="ChEBI" id="CHEBI:57379"/>
        <dbReference type="ChEBI" id="CHEBI:456215"/>
    </reaction>
</comment>
<comment type="subcellular location">
    <subcellularLocation>
        <location evidence="3">Cytoplasm</location>
    </subcellularLocation>
    <subcellularLocation>
        <location evidence="1">Cytoplasmic vesicle</location>
    </subcellularLocation>
    <subcellularLocation>
        <location evidence="1">Microsome</location>
    </subcellularLocation>
    <subcellularLocation>
        <location evidence="3">Endoplasmic reticulum</location>
    </subcellularLocation>
    <subcellularLocation>
        <location evidence="3">Cell membrane</location>
    </subcellularLocation>
</comment>
<comment type="similarity">
    <text evidence="6">Belongs to the ATP-dependent AMP-binding enzyme family. Bubblegum subfamily.</text>
</comment>
<comment type="sequence caution" evidence="6">
    <conflict type="frameshift">
        <sequence resource="EMBL-CDS" id="AAX46711"/>
    </conflict>
</comment>